<reference key="1">
    <citation type="journal article" date="1998" name="Mol. Gen. Genet.">
        <title>PsbY, a novel manganese-binding, low-molecular-mass protein associated with photosystem II.</title>
        <authorList>
            <person name="Gau A.E."/>
            <person name="Thole H.H."/>
            <person name="Sokolenko A."/>
            <person name="Altschmied L."/>
            <person name="Herrmann R.G."/>
            <person name="Pistorius E.K."/>
        </authorList>
    </citation>
    <scope>NUCLEOTIDE SEQUENCE [MRNA]</scope>
    <scope>PROTEIN SEQUENCE OF 86-128 AND 155-179</scope>
    <scope>CHLOROPLAST IMPORT</scope>
    <scope>SUBCELLULAR LOCATION</scope>
    <scope>TISSUE SPECIFICITY</scope>
    <scope>DEVELOPMENTAL STAGE</scope>
    <scope>INDUCTION</scope>
    <scope>TOPOLOGY</scope>
    <scope>MANGANESE-BINDING</scope>
</reference>
<reference key="2">
    <citation type="journal article" date="1995" name="Z. Naturforsch. C">
        <title>Isolation and partial characterization of a manganese requiring L-arginine metabolizing enzyme being present in photosystem II complexes of spinach and tobacco.</title>
        <authorList>
            <person name="Gau A.E."/>
            <person name="Thole H.H."/>
            <person name="Pistorius E.K."/>
        </authorList>
    </citation>
    <scope>PROTEIN SEQUENCE OF 86-128</scope>
    <scope>CHARACTERIZATION</scope>
</reference>
<keyword id="KW-0002">3D-structure</keyword>
<keyword id="KW-0150">Chloroplast</keyword>
<keyword id="KW-0903">Direct protein sequencing</keyword>
<keyword id="KW-0464">Manganese</keyword>
<keyword id="KW-0472">Membrane</keyword>
<keyword id="KW-0602">Photosynthesis</keyword>
<keyword id="KW-0604">Photosystem II</keyword>
<keyword id="KW-0934">Plastid</keyword>
<keyword id="KW-1185">Reference proteome</keyword>
<keyword id="KW-0677">Repeat</keyword>
<keyword id="KW-0793">Thylakoid</keyword>
<keyword id="KW-0809">Transit peptide</keyword>
<keyword id="KW-0812">Transmembrane</keyword>
<keyword id="KW-1133">Transmembrane helix</keyword>
<dbReference type="EMBL" id="AF060198">
    <property type="protein sequence ID" value="AAC95000.1"/>
    <property type="molecule type" value="mRNA"/>
</dbReference>
<dbReference type="PIR" id="T08902">
    <property type="entry name" value="T08902"/>
</dbReference>
<dbReference type="PDB" id="8Z9D">
    <property type="method" value="EM"/>
    <property type="resolution" value="3.22 A"/>
    <property type="chains" value="5/55=1-199"/>
</dbReference>
<dbReference type="PDBsum" id="8Z9D"/>
<dbReference type="EMDB" id="EMD-39860"/>
<dbReference type="SMR" id="P80470"/>
<dbReference type="OrthoDB" id="2016024at2759"/>
<dbReference type="BRENDA" id="1.97.1.12">
    <property type="organism ID" value="5812"/>
</dbReference>
<dbReference type="Proteomes" id="UP001155700">
    <property type="component" value="Unplaced"/>
</dbReference>
<dbReference type="GO" id="GO:0009534">
    <property type="term" value="C:chloroplast thylakoid"/>
    <property type="evidence" value="ECO:0000318"/>
    <property type="project" value="GO_Central"/>
</dbReference>
<dbReference type="GO" id="GO:0009535">
    <property type="term" value="C:chloroplast thylakoid membrane"/>
    <property type="evidence" value="ECO:0007669"/>
    <property type="project" value="UniProtKB-SubCell"/>
</dbReference>
<dbReference type="GO" id="GO:0009523">
    <property type="term" value="C:photosystem II"/>
    <property type="evidence" value="ECO:0007669"/>
    <property type="project" value="UniProtKB-KW"/>
</dbReference>
<dbReference type="GO" id="GO:0030145">
    <property type="term" value="F:manganese ion binding"/>
    <property type="evidence" value="ECO:0007669"/>
    <property type="project" value="InterPro"/>
</dbReference>
<dbReference type="GO" id="GO:0045454">
    <property type="term" value="P:cell redox homeostasis"/>
    <property type="evidence" value="ECO:0000318"/>
    <property type="project" value="GO_Central"/>
</dbReference>
<dbReference type="GO" id="GO:0015979">
    <property type="term" value="P:photosynthesis"/>
    <property type="evidence" value="ECO:0007669"/>
    <property type="project" value="UniProtKB-KW"/>
</dbReference>
<dbReference type="HAMAP" id="MF_00717">
    <property type="entry name" value="PSII_PsbY"/>
    <property type="match status" value="2"/>
</dbReference>
<dbReference type="InterPro" id="IPR038760">
    <property type="entry name" value="PsbY_plant"/>
</dbReference>
<dbReference type="InterPro" id="IPR009388">
    <property type="entry name" value="PSII_PsbY"/>
</dbReference>
<dbReference type="PANTHER" id="PTHR34790">
    <property type="entry name" value="PHOTOSYSTEM II CORE COMPLEX PROTEINS PSBY, CHLOROPLASTIC"/>
    <property type="match status" value="1"/>
</dbReference>
<dbReference type="PANTHER" id="PTHR34790:SF1">
    <property type="entry name" value="PHOTOSYSTEM II CORE COMPLEX PROTEINS PSBY, CHLOROPLASTIC"/>
    <property type="match status" value="1"/>
</dbReference>
<dbReference type="Pfam" id="PF06298">
    <property type="entry name" value="PsbY"/>
    <property type="match status" value="2"/>
</dbReference>
<organism>
    <name type="scientific">Spinacia oleracea</name>
    <name type="common">Spinach</name>
    <dbReference type="NCBI Taxonomy" id="3562"/>
    <lineage>
        <taxon>Eukaryota</taxon>
        <taxon>Viridiplantae</taxon>
        <taxon>Streptophyta</taxon>
        <taxon>Embryophyta</taxon>
        <taxon>Tracheophyta</taxon>
        <taxon>Spermatophyta</taxon>
        <taxon>Magnoliopsida</taxon>
        <taxon>eudicotyledons</taxon>
        <taxon>Gunneridae</taxon>
        <taxon>Pentapetalae</taxon>
        <taxon>Caryophyllales</taxon>
        <taxon>Chenopodiaceae</taxon>
        <taxon>Chenopodioideae</taxon>
        <taxon>Anserineae</taxon>
        <taxon>Spinacia</taxon>
    </lineage>
</organism>
<protein>
    <recommendedName>
        <fullName>Photosystem II reaction center proteins PsbY, chloroplastic</fullName>
    </recommendedName>
    <alternativeName>
        <fullName evidence="6">L-arginine-metabolizing enzyme</fullName>
        <shortName evidence="6">L-AME</shortName>
    </alternativeName>
    <component>
        <recommendedName>
            <fullName>Photosystem II reaction center protein PsbY-1, chloroplastic</fullName>
        </recommendedName>
        <alternativeName>
            <fullName>PsbY-A1</fullName>
        </alternativeName>
    </component>
    <component>
        <recommendedName>
            <fullName>Photosystem II reaction center protein PsbY-2, chloroplastic</fullName>
        </recommendedName>
        <alternativeName>
            <fullName>PsbY-A2</fullName>
        </alternativeName>
    </component>
</protein>
<comment type="function">
    <text evidence="2 4 5">Loosely associated component of the core of photosystem II (PSII), it is not always seen in crystals. PSII is a light-driven water plastoquinone oxidoreductase, using light energy to abstract electrons from H(2)O, generating a proton gradient subsequently used for ATP formation (By similarity). PsbY-1 and -2 are manganese-binding polypeptides with L-arginine metabolizing enzyme activity. They are a component of the core of photosystem II. They have also a minor catalase-like activity since they cause evolution of oxygen from hydrogen peroxide in a reaction stimulated by manganese (PubMed:9829828, Ref.2).</text>
</comment>
<comment type="subcellular location">
    <subcellularLocation>
        <location evidence="4">Plastid</location>
        <location evidence="4">Chloroplast thylakoid membrane</location>
        <topology>Multi-pass membrane protein</topology>
    </subcellularLocation>
    <text evidence="4">Imports into spinach thylakoid membranes.</text>
</comment>
<comment type="tissue specificity">
    <text evidence="4">Leaves. Not present in stems and roots.</text>
</comment>
<comment type="developmental stage">
    <text evidence="4">Developmentally regulated.</text>
</comment>
<comment type="induction">
    <text evidence="4">Photocontrolled. Steady-state concentrations increase for the first 3 hours of illumination and then decline.</text>
</comment>
<comment type="miscellaneous">
    <text evidence="8">The central hydrophobic segment (residues 130-150) does not form a membrane-spanning region but could serve as a targeting signal for processing of the precursor in the thylakoid membrane.</text>
</comment>
<comment type="similarity">
    <text evidence="7">Belongs to the PsbY family.</text>
</comment>
<comment type="caution">
    <text evidence="1 8">Was originally thought to be a manganese-binding polypeptide with L-arginine metabolizing activity, with a possible role in the function of the CaMn4O5-cluster in oxygen-evolving PSII (PubMed:9829828). However it is not essential for PSII activity in cyanobacteria and does not furnish ligands for the CaMn4O5 cluster (By similarity).</text>
</comment>
<evidence type="ECO:0000250" key="1">
    <source>
        <dbReference type="UniProtKB" id="P73676"/>
    </source>
</evidence>
<evidence type="ECO:0000250" key="2">
    <source>
        <dbReference type="UniProtKB" id="Q8DKM3"/>
    </source>
</evidence>
<evidence type="ECO:0000255" key="3"/>
<evidence type="ECO:0000269" key="4">
    <source>
    </source>
</evidence>
<evidence type="ECO:0000269" key="5">
    <source ref="2"/>
</evidence>
<evidence type="ECO:0000303" key="6">
    <source ref="2"/>
</evidence>
<evidence type="ECO:0000305" key="7"/>
<evidence type="ECO:0000305" key="8">
    <source>
    </source>
</evidence>
<gene>
    <name type="primary">PSBY</name>
</gene>
<sequence>MAATMATTMAVLNTKCLTLNTNKTTSTSPKPTSKPISLSPLGLSNSKLPMGLSPIITAPAIAGAVFATLGSVDPAFAVQQLADIAAEAGTSDNRGLALLLPIIPALGWVLFNILQPALNQINKMRNEKKAFIVGLGLSGLATSGLLLATPEAQAASEEIARGSDNRGTLLLLVVLPAIGWVLFNILQPALNQLNKMRSQ</sequence>
<proteinExistence type="evidence at protein level"/>
<feature type="transit peptide" description="Chloroplast" evidence="4 5">
    <location>
        <begin position="1"/>
        <end position="85"/>
    </location>
</feature>
<feature type="chain" id="PRO_0000029613" description="Photosystem II reaction center protein PsbY-1, chloroplastic">
    <location>
        <begin position="86"/>
        <end position="128"/>
    </location>
</feature>
<feature type="propeptide" id="PRO_0000029614" evidence="4">
    <location>
        <begin position="129"/>
        <end position="154"/>
    </location>
</feature>
<feature type="chain" id="PRO_0000029615" description="Photosystem II reaction center protein PsbY-2, chloroplastic">
    <location>
        <begin position="155"/>
        <end position="199"/>
    </location>
</feature>
<feature type="topological domain" description="Lumenal" evidence="4">
    <location>
        <begin position="86"/>
        <end position="94"/>
    </location>
</feature>
<feature type="transmembrane region" description="Helical" evidence="3">
    <location>
        <begin position="95"/>
        <end position="115"/>
    </location>
</feature>
<feature type="topological domain" description="Stromal" evidence="4">
    <location>
        <begin position="116"/>
        <end position="129"/>
    </location>
</feature>
<feature type="transmembrane region" description="Helical" evidence="3">
    <location>
        <begin position="130"/>
        <end position="150"/>
    </location>
</feature>
<feature type="topological domain" description="Lumenal" evidence="4">
    <location>
        <begin position="151"/>
        <end position="168"/>
    </location>
</feature>
<feature type="transmembrane region" description="Helical" evidence="3">
    <location>
        <begin position="169"/>
        <end position="189"/>
    </location>
</feature>
<feature type="topological domain" description="Stromal" evidence="4">
    <location>
        <begin position="190"/>
        <end position="199"/>
    </location>
</feature>
<accession>P80470</accession>
<name>PSBY_SPIOL</name>